<keyword id="KW-0012">Acyltransferase</keyword>
<keyword id="KW-0028">Amino-acid biosynthesis</keyword>
<keyword id="KW-0963">Cytoplasm</keyword>
<keyword id="KW-0220">Diaminopimelate biosynthesis</keyword>
<keyword id="KW-0457">Lysine biosynthesis</keyword>
<keyword id="KW-0677">Repeat</keyword>
<keyword id="KW-0808">Transferase</keyword>
<feature type="chain" id="PRO_1000134046" description="2,3,4,5-tetrahydropyridine-2,6-dicarboxylate N-succinyltransferase">
    <location>
        <begin position="1"/>
        <end position="274"/>
    </location>
</feature>
<dbReference type="EC" id="2.3.1.117" evidence="1"/>
<dbReference type="EMBL" id="CU928163">
    <property type="protein sequence ID" value="CAR11383.1"/>
    <property type="molecule type" value="Genomic_DNA"/>
</dbReference>
<dbReference type="RefSeq" id="WP_001186656.1">
    <property type="nucleotide sequence ID" value="NC_011751.1"/>
</dbReference>
<dbReference type="RefSeq" id="YP_002410939.1">
    <property type="nucleotide sequence ID" value="NC_011751.1"/>
</dbReference>
<dbReference type="SMR" id="B7N833"/>
<dbReference type="STRING" id="585056.ECUMN_0162"/>
<dbReference type="KEGG" id="eum:ECUMN_0162"/>
<dbReference type="PATRIC" id="fig|585056.7.peg.355"/>
<dbReference type="HOGENOM" id="CLU_050859_0_1_6"/>
<dbReference type="UniPathway" id="UPA00034">
    <property type="reaction ID" value="UER00019"/>
</dbReference>
<dbReference type="Proteomes" id="UP000007097">
    <property type="component" value="Chromosome"/>
</dbReference>
<dbReference type="GO" id="GO:0005737">
    <property type="term" value="C:cytoplasm"/>
    <property type="evidence" value="ECO:0007669"/>
    <property type="project" value="UniProtKB-SubCell"/>
</dbReference>
<dbReference type="GO" id="GO:0008666">
    <property type="term" value="F:2,3,4,5-tetrahydropyridine-2,6-dicarboxylate N-succinyltransferase activity"/>
    <property type="evidence" value="ECO:0007669"/>
    <property type="project" value="UniProtKB-UniRule"/>
</dbReference>
<dbReference type="GO" id="GO:0016779">
    <property type="term" value="F:nucleotidyltransferase activity"/>
    <property type="evidence" value="ECO:0007669"/>
    <property type="project" value="TreeGrafter"/>
</dbReference>
<dbReference type="GO" id="GO:0019877">
    <property type="term" value="P:diaminopimelate biosynthetic process"/>
    <property type="evidence" value="ECO:0007669"/>
    <property type="project" value="UniProtKB-UniRule"/>
</dbReference>
<dbReference type="GO" id="GO:0009089">
    <property type="term" value="P:lysine biosynthetic process via diaminopimelate"/>
    <property type="evidence" value="ECO:0007669"/>
    <property type="project" value="UniProtKB-UniRule"/>
</dbReference>
<dbReference type="CDD" id="cd03350">
    <property type="entry name" value="LbH_THP_succinylT"/>
    <property type="match status" value="1"/>
</dbReference>
<dbReference type="FunFam" id="1.10.166.10:FF:000001">
    <property type="entry name" value="2,3,4,5-tetrahydropyridine-2,6-dicarboxylate N-succinyltransferase"/>
    <property type="match status" value="1"/>
</dbReference>
<dbReference type="FunFam" id="2.160.10.10:FF:000004">
    <property type="entry name" value="2,3,4,5-tetrahydropyridine-2,6-dicarboxylate N-succinyltransferase"/>
    <property type="match status" value="1"/>
</dbReference>
<dbReference type="Gene3D" id="2.160.10.10">
    <property type="entry name" value="Hexapeptide repeat proteins"/>
    <property type="match status" value="1"/>
</dbReference>
<dbReference type="Gene3D" id="1.10.166.10">
    <property type="entry name" value="Tetrahydrodipicolinate-N-succinyltransferase, N-terminal domain"/>
    <property type="match status" value="1"/>
</dbReference>
<dbReference type="HAMAP" id="MF_00811">
    <property type="entry name" value="DapD"/>
    <property type="match status" value="1"/>
</dbReference>
<dbReference type="InterPro" id="IPR005664">
    <property type="entry name" value="DapD_Trfase_Hexpep_rpt_fam"/>
</dbReference>
<dbReference type="InterPro" id="IPR001451">
    <property type="entry name" value="Hexapep"/>
</dbReference>
<dbReference type="InterPro" id="IPR018357">
    <property type="entry name" value="Hexapep_transf_CS"/>
</dbReference>
<dbReference type="InterPro" id="IPR023180">
    <property type="entry name" value="THP_succinylTrfase_dom1"/>
</dbReference>
<dbReference type="InterPro" id="IPR037133">
    <property type="entry name" value="THP_succinylTrfase_N_sf"/>
</dbReference>
<dbReference type="InterPro" id="IPR011004">
    <property type="entry name" value="Trimer_LpxA-like_sf"/>
</dbReference>
<dbReference type="NCBIfam" id="TIGR00965">
    <property type="entry name" value="dapD"/>
    <property type="match status" value="1"/>
</dbReference>
<dbReference type="NCBIfam" id="NF008808">
    <property type="entry name" value="PRK11830.1"/>
    <property type="match status" value="1"/>
</dbReference>
<dbReference type="PANTHER" id="PTHR19136:SF52">
    <property type="entry name" value="2,3,4,5-TETRAHYDROPYRIDINE-2,6-DICARBOXYLATE N-SUCCINYLTRANSFERASE"/>
    <property type="match status" value="1"/>
</dbReference>
<dbReference type="PANTHER" id="PTHR19136">
    <property type="entry name" value="MOLYBDENUM COFACTOR GUANYLYLTRANSFERASE"/>
    <property type="match status" value="1"/>
</dbReference>
<dbReference type="Pfam" id="PF14602">
    <property type="entry name" value="Hexapep_2"/>
    <property type="match status" value="1"/>
</dbReference>
<dbReference type="Pfam" id="PF14805">
    <property type="entry name" value="THDPS_N_2"/>
    <property type="match status" value="1"/>
</dbReference>
<dbReference type="SUPFAM" id="SSF51161">
    <property type="entry name" value="Trimeric LpxA-like enzymes"/>
    <property type="match status" value="1"/>
</dbReference>
<dbReference type="PROSITE" id="PS00101">
    <property type="entry name" value="HEXAPEP_TRANSFERASES"/>
    <property type="match status" value="1"/>
</dbReference>
<name>DAPD_ECOLU</name>
<evidence type="ECO:0000255" key="1">
    <source>
        <dbReference type="HAMAP-Rule" id="MF_00811"/>
    </source>
</evidence>
<proteinExistence type="inferred from homology"/>
<reference key="1">
    <citation type="journal article" date="2009" name="PLoS Genet.">
        <title>Organised genome dynamics in the Escherichia coli species results in highly diverse adaptive paths.</title>
        <authorList>
            <person name="Touchon M."/>
            <person name="Hoede C."/>
            <person name="Tenaillon O."/>
            <person name="Barbe V."/>
            <person name="Baeriswyl S."/>
            <person name="Bidet P."/>
            <person name="Bingen E."/>
            <person name="Bonacorsi S."/>
            <person name="Bouchier C."/>
            <person name="Bouvet O."/>
            <person name="Calteau A."/>
            <person name="Chiapello H."/>
            <person name="Clermont O."/>
            <person name="Cruveiller S."/>
            <person name="Danchin A."/>
            <person name="Diard M."/>
            <person name="Dossat C."/>
            <person name="Karoui M.E."/>
            <person name="Frapy E."/>
            <person name="Garry L."/>
            <person name="Ghigo J.M."/>
            <person name="Gilles A.M."/>
            <person name="Johnson J."/>
            <person name="Le Bouguenec C."/>
            <person name="Lescat M."/>
            <person name="Mangenot S."/>
            <person name="Martinez-Jehanne V."/>
            <person name="Matic I."/>
            <person name="Nassif X."/>
            <person name="Oztas S."/>
            <person name="Petit M.A."/>
            <person name="Pichon C."/>
            <person name="Rouy Z."/>
            <person name="Ruf C.S."/>
            <person name="Schneider D."/>
            <person name="Tourret J."/>
            <person name="Vacherie B."/>
            <person name="Vallenet D."/>
            <person name="Medigue C."/>
            <person name="Rocha E.P.C."/>
            <person name="Denamur E."/>
        </authorList>
    </citation>
    <scope>NUCLEOTIDE SEQUENCE [LARGE SCALE GENOMIC DNA]</scope>
    <source>
        <strain>UMN026 / ExPEC</strain>
    </source>
</reference>
<accession>B7N833</accession>
<protein>
    <recommendedName>
        <fullName evidence="1">2,3,4,5-tetrahydropyridine-2,6-dicarboxylate N-succinyltransferase</fullName>
        <ecNumber evidence="1">2.3.1.117</ecNumber>
    </recommendedName>
    <alternativeName>
        <fullName evidence="1">Tetrahydrodipicolinate N-succinyltransferase</fullName>
        <shortName evidence="1">THP succinyltransferase</shortName>
        <shortName evidence="1">Tetrahydropicolinate succinylase</shortName>
    </alternativeName>
</protein>
<comment type="catalytic activity">
    <reaction evidence="1">
        <text>(S)-2,3,4,5-tetrahydrodipicolinate + succinyl-CoA + H2O = (S)-2-succinylamino-6-oxoheptanedioate + CoA</text>
        <dbReference type="Rhea" id="RHEA:17325"/>
        <dbReference type="ChEBI" id="CHEBI:15377"/>
        <dbReference type="ChEBI" id="CHEBI:15685"/>
        <dbReference type="ChEBI" id="CHEBI:16845"/>
        <dbReference type="ChEBI" id="CHEBI:57287"/>
        <dbReference type="ChEBI" id="CHEBI:57292"/>
        <dbReference type="EC" id="2.3.1.117"/>
    </reaction>
</comment>
<comment type="pathway">
    <text evidence="1">Amino-acid biosynthesis; L-lysine biosynthesis via DAP pathway; LL-2,6-diaminopimelate from (S)-tetrahydrodipicolinate (succinylase route): step 1/3.</text>
</comment>
<comment type="subcellular location">
    <subcellularLocation>
        <location evidence="1">Cytoplasm</location>
    </subcellularLocation>
</comment>
<comment type="similarity">
    <text evidence="1">Belongs to the transferase hexapeptide repeat family.</text>
</comment>
<gene>
    <name evidence="1" type="primary">dapD</name>
    <name type="ordered locus">ECUMN_0162</name>
</gene>
<sequence>MQQLQNIIETAFERRAEITPANADTVTREAVNQVIALLDSGALRVAEKIDGQWVTHQWLKKAVLLSFRINDNQVIEGAESRYFDKVPMKFANYDEARFQKEGFRVVPPAAVRQGAFIARNTVLMPSYVNIGAYVDEGTMVDTWATVGSCAQIGKNVHLSGGVGIGGVLEPLQANPTIIEDNCFIGARSEVVEGVIVEEGSVISMGVYIGQSTRIYDRETGEIHYGRVPAGSVVVSGNLPSKDGKYSLYCAVIVKKVDAKTRGKVGINELLRTID</sequence>
<organism>
    <name type="scientific">Escherichia coli O17:K52:H18 (strain UMN026 / ExPEC)</name>
    <dbReference type="NCBI Taxonomy" id="585056"/>
    <lineage>
        <taxon>Bacteria</taxon>
        <taxon>Pseudomonadati</taxon>
        <taxon>Pseudomonadota</taxon>
        <taxon>Gammaproteobacteria</taxon>
        <taxon>Enterobacterales</taxon>
        <taxon>Enterobacteriaceae</taxon>
        <taxon>Escherichia</taxon>
    </lineage>
</organism>